<gene>
    <name evidence="1" type="primary">psbC</name>
</gene>
<geneLocation type="chloroplast"/>
<sequence>MKTLYSLRRFYPVETLFNGTLSLAGRDQETTGFAWWAGNARLINLSGKLLGAHVAHAGLIVFWAGAMNLFEVAHFVPEKPMYEQGLILLPHLATLGWGVGPGGEVVDTFPYFVSGVLHLISSAVLGFGGIYHALLGPETLEESFPFFGYVWKDRNKMTTILGIHLILLGIGAFLLVLKALYFGGVYDTWAPGGGDVRKITNLTLSPSVIFGYLLKSPFGGEGWIVSVDDLEDIIGGHVWLGSICILGGIWHILTKPFAWARRAFVWSGEAYLSYSLGALSVFGFIACCFVWFNNTAYPSEFYGPTGPEASQAQAFTFLVRDQRLGANVGSAQGPTGLGKYLMRSPTGEVIFGGETMRFWDLRAPWLEPLRGPNGLDLSRLKKDIQPWQERRSAEYMTHAPLGSLNSVGGVATEINAVNYVSPRSWLATSHFVLGFFLFVGHLWHAGRARAAAAGFEKGIDRDFEPVLSMTPLN</sequence>
<evidence type="ECO:0000255" key="1">
    <source>
        <dbReference type="HAMAP-Rule" id="MF_01496"/>
    </source>
</evidence>
<organism>
    <name type="scientific">Liriodendron tulipifera</name>
    <name type="common">Tuliptree</name>
    <name type="synonym">Tulip poplar</name>
    <dbReference type="NCBI Taxonomy" id="3415"/>
    <lineage>
        <taxon>Eukaryota</taxon>
        <taxon>Viridiplantae</taxon>
        <taxon>Streptophyta</taxon>
        <taxon>Embryophyta</taxon>
        <taxon>Tracheophyta</taxon>
        <taxon>Spermatophyta</taxon>
        <taxon>Magnoliopsida</taxon>
        <taxon>Magnoliidae</taxon>
        <taxon>Magnoliales</taxon>
        <taxon>Magnoliaceae</taxon>
        <taxon>Liriodendron</taxon>
    </lineage>
</organism>
<accession>Q0G9M3</accession>
<dbReference type="EMBL" id="DQ899947">
    <property type="protein sequence ID" value="ABI32505.1"/>
    <property type="molecule type" value="Genomic_DNA"/>
</dbReference>
<dbReference type="RefSeq" id="YP_740198.1">
    <property type="nucleotide sequence ID" value="NC_008326.1"/>
</dbReference>
<dbReference type="SMR" id="Q0G9M3"/>
<dbReference type="GeneID" id="4266611"/>
<dbReference type="GO" id="GO:0009535">
    <property type="term" value="C:chloroplast thylakoid membrane"/>
    <property type="evidence" value="ECO:0007669"/>
    <property type="project" value="UniProtKB-SubCell"/>
</dbReference>
<dbReference type="GO" id="GO:0009523">
    <property type="term" value="C:photosystem II"/>
    <property type="evidence" value="ECO:0007669"/>
    <property type="project" value="UniProtKB-KW"/>
</dbReference>
<dbReference type="GO" id="GO:0016168">
    <property type="term" value="F:chlorophyll binding"/>
    <property type="evidence" value="ECO:0007669"/>
    <property type="project" value="UniProtKB-UniRule"/>
</dbReference>
<dbReference type="GO" id="GO:0045156">
    <property type="term" value="F:electron transporter, transferring electrons within the cyclic electron transport pathway of photosynthesis activity"/>
    <property type="evidence" value="ECO:0007669"/>
    <property type="project" value="InterPro"/>
</dbReference>
<dbReference type="GO" id="GO:0046872">
    <property type="term" value="F:metal ion binding"/>
    <property type="evidence" value="ECO:0007669"/>
    <property type="project" value="UniProtKB-KW"/>
</dbReference>
<dbReference type="GO" id="GO:0009772">
    <property type="term" value="P:photosynthetic electron transport in photosystem II"/>
    <property type="evidence" value="ECO:0007669"/>
    <property type="project" value="InterPro"/>
</dbReference>
<dbReference type="FunFam" id="1.10.10.670:FF:000001">
    <property type="entry name" value="Photosystem II CP43 reaction center protein"/>
    <property type="match status" value="1"/>
</dbReference>
<dbReference type="Gene3D" id="1.10.10.670">
    <property type="entry name" value="photosystem ii from thermosynechococcus elongatus"/>
    <property type="match status" value="1"/>
</dbReference>
<dbReference type="HAMAP" id="MF_01496">
    <property type="entry name" value="PSII_PsbC_CP43"/>
    <property type="match status" value="1"/>
</dbReference>
<dbReference type="InterPro" id="IPR000932">
    <property type="entry name" value="PS_antenna-like"/>
</dbReference>
<dbReference type="InterPro" id="IPR036001">
    <property type="entry name" value="PS_II_antenna-like_sf"/>
</dbReference>
<dbReference type="InterPro" id="IPR005869">
    <property type="entry name" value="PSII_PsbC"/>
</dbReference>
<dbReference type="InterPro" id="IPR044900">
    <property type="entry name" value="PSII_PsbC_sf"/>
</dbReference>
<dbReference type="NCBIfam" id="TIGR01153">
    <property type="entry name" value="psbC"/>
    <property type="match status" value="1"/>
</dbReference>
<dbReference type="Pfam" id="PF00421">
    <property type="entry name" value="PSII"/>
    <property type="match status" value="1"/>
</dbReference>
<dbReference type="SUPFAM" id="SSF161077">
    <property type="entry name" value="Photosystem II antenna protein-like"/>
    <property type="match status" value="1"/>
</dbReference>
<comment type="function">
    <text evidence="1">One of the components of the core complex of photosystem II (PSII). It binds chlorophyll and helps catalyze the primary light-induced photochemical processes of PSII. PSII is a light-driven water:plastoquinone oxidoreductase, using light energy to abstract electrons from H(2)O, generating O(2) and a proton gradient subsequently used for ATP formation.</text>
</comment>
<comment type="cofactor">
    <text evidence="1">Binds multiple chlorophylls and provides some of the ligands for the Ca-4Mn-5O cluster of the oxygen-evolving complex. It may also provide a ligand for a Cl- that is required for oxygen evolution. PSII binds additional chlorophylls, carotenoids and specific lipids.</text>
</comment>
<comment type="subunit">
    <text evidence="1">PSII is composed of 1 copy each of membrane proteins PsbA, PsbB, PsbC, PsbD, PsbE, PsbF, PsbH, PsbI, PsbJ, PsbK, PsbL, PsbM, PsbT, PsbX, PsbY, PsbZ, Psb30/Ycf12, at least 3 peripheral proteins of the oxygen-evolving complex and a large number of cofactors. It forms dimeric complexes.</text>
</comment>
<comment type="subcellular location">
    <subcellularLocation>
        <location evidence="1">Plastid</location>
        <location evidence="1">Chloroplast thylakoid membrane</location>
        <topology evidence="1">Multi-pass membrane protein</topology>
    </subcellularLocation>
</comment>
<comment type="similarity">
    <text evidence="1">Belongs to the PsbB/PsbC family. PsbC subfamily.</text>
</comment>
<feature type="propeptide" id="PRO_0000431160" evidence="1">
    <location>
        <begin position="1"/>
        <end position="14"/>
    </location>
</feature>
<feature type="chain" id="PRO_0000361412" description="Photosystem II CP43 reaction center protein" evidence="1">
    <location>
        <begin position="15"/>
        <end position="473"/>
    </location>
</feature>
<feature type="transmembrane region" description="Helical" evidence="1">
    <location>
        <begin position="69"/>
        <end position="93"/>
    </location>
</feature>
<feature type="transmembrane region" description="Helical" evidence="1">
    <location>
        <begin position="134"/>
        <end position="155"/>
    </location>
</feature>
<feature type="transmembrane region" description="Helical" evidence="1">
    <location>
        <begin position="178"/>
        <end position="200"/>
    </location>
</feature>
<feature type="transmembrane region" description="Helical" evidence="1">
    <location>
        <begin position="255"/>
        <end position="275"/>
    </location>
</feature>
<feature type="transmembrane region" description="Helical" evidence="1">
    <location>
        <begin position="291"/>
        <end position="312"/>
    </location>
</feature>
<feature type="transmembrane region" description="Helical" evidence="1">
    <location>
        <begin position="447"/>
        <end position="471"/>
    </location>
</feature>
<feature type="binding site" evidence="1">
    <location>
        <position position="367"/>
    </location>
    <ligand>
        <name>[CaMn4O5] cluster</name>
        <dbReference type="ChEBI" id="CHEBI:189552"/>
    </ligand>
</feature>
<feature type="modified residue" description="N-acetylthreonine" evidence="1">
    <location>
        <position position="15"/>
    </location>
</feature>
<feature type="modified residue" description="Phosphothreonine" evidence="1">
    <location>
        <position position="15"/>
    </location>
</feature>
<protein>
    <recommendedName>
        <fullName evidence="1">Photosystem II CP43 reaction center protein</fullName>
    </recommendedName>
    <alternativeName>
        <fullName evidence="1">PSII 43 kDa protein</fullName>
    </alternativeName>
    <alternativeName>
        <fullName evidence="1">Protein CP-43</fullName>
    </alternativeName>
</protein>
<keyword id="KW-0007">Acetylation</keyword>
<keyword id="KW-0148">Chlorophyll</keyword>
<keyword id="KW-0150">Chloroplast</keyword>
<keyword id="KW-0157">Chromophore</keyword>
<keyword id="KW-0464">Manganese</keyword>
<keyword id="KW-0472">Membrane</keyword>
<keyword id="KW-0479">Metal-binding</keyword>
<keyword id="KW-0597">Phosphoprotein</keyword>
<keyword id="KW-0602">Photosynthesis</keyword>
<keyword id="KW-0604">Photosystem II</keyword>
<keyword id="KW-0934">Plastid</keyword>
<keyword id="KW-0793">Thylakoid</keyword>
<keyword id="KW-0812">Transmembrane</keyword>
<keyword id="KW-1133">Transmembrane helix</keyword>
<name>PSBC_LIRTU</name>
<reference key="1">
    <citation type="journal article" date="2006" name="BMC Evol. Biol.">
        <title>Complete plastid genome sequences of Drimys, Liriodendron, and Piper: implications for the phylogenetic relationships of magnoliids.</title>
        <authorList>
            <person name="Cai Z."/>
            <person name="Penaflor C."/>
            <person name="Kuehl J.V."/>
            <person name="Leebens-Mack J."/>
            <person name="Carlson J.E."/>
            <person name="dePamphilis C.W."/>
            <person name="Boore J.L."/>
            <person name="Jansen R.K."/>
        </authorList>
    </citation>
    <scope>NUCLEOTIDE SEQUENCE [LARGE SCALE GENOMIC DNA]</scope>
</reference>
<proteinExistence type="inferred from homology"/>